<evidence type="ECO:0000250" key="1"/>
<evidence type="ECO:0000250" key="2">
    <source>
        <dbReference type="UniProtKB" id="P25054"/>
    </source>
</evidence>
<evidence type="ECO:0000250" key="3">
    <source>
        <dbReference type="UniProtKB" id="Q61315"/>
    </source>
</evidence>
<evidence type="ECO:0000255" key="4"/>
<evidence type="ECO:0000256" key="5">
    <source>
        <dbReference type="SAM" id="MobiDB-lite"/>
    </source>
</evidence>
<evidence type="ECO:0000269" key="6">
    <source>
    </source>
</evidence>
<evidence type="ECO:0000269" key="7">
    <source>
    </source>
</evidence>
<evidence type="ECO:0000305" key="8"/>
<evidence type="ECO:0007744" key="9">
    <source>
    </source>
</evidence>
<evidence type="ECO:0007744" key="10">
    <source>
    </source>
</evidence>
<dbReference type="EMBL" id="D38629">
    <property type="protein sequence ID" value="BAA07609.1"/>
    <property type="molecule type" value="mRNA"/>
</dbReference>
<dbReference type="RefSeq" id="NP_036631.1">
    <property type="nucleotide sequence ID" value="NM_012499.1"/>
</dbReference>
<dbReference type="SMR" id="P70478"/>
<dbReference type="BioGRID" id="246393">
    <property type="interactions" value="6"/>
</dbReference>
<dbReference type="CORUM" id="P70478"/>
<dbReference type="FunCoup" id="P70478">
    <property type="interactions" value="1479"/>
</dbReference>
<dbReference type="IntAct" id="P70478">
    <property type="interactions" value="3"/>
</dbReference>
<dbReference type="STRING" id="10116.ENSRNOP00000074593"/>
<dbReference type="GlyGen" id="P70478">
    <property type="glycosylation" value="1 site"/>
</dbReference>
<dbReference type="iPTMnet" id="P70478"/>
<dbReference type="PhosphoSitePlus" id="P70478"/>
<dbReference type="PaxDb" id="10116-ENSRNOP00000027691"/>
<dbReference type="GeneID" id="24205"/>
<dbReference type="KEGG" id="rno:24205"/>
<dbReference type="UCSC" id="RGD:2123">
    <property type="organism name" value="rat"/>
</dbReference>
<dbReference type="AGR" id="RGD:2123"/>
<dbReference type="CTD" id="324"/>
<dbReference type="RGD" id="2123">
    <property type="gene designation" value="Apc"/>
</dbReference>
<dbReference type="eggNOG" id="KOG2122">
    <property type="taxonomic scope" value="Eukaryota"/>
</dbReference>
<dbReference type="InParanoid" id="P70478"/>
<dbReference type="OrthoDB" id="5918429at2759"/>
<dbReference type="PhylomeDB" id="P70478"/>
<dbReference type="Reactome" id="R-RNO-111465">
    <property type="pathway name" value="Apoptotic cleavage of cellular proteins"/>
</dbReference>
<dbReference type="Reactome" id="R-RNO-195253">
    <property type="pathway name" value="Degradation of beta-catenin by the destruction complex"/>
</dbReference>
<dbReference type="Reactome" id="R-RNO-196299">
    <property type="pathway name" value="Beta-catenin phosphorylation cascade"/>
</dbReference>
<dbReference type="Reactome" id="R-RNO-3769402">
    <property type="pathway name" value="Deactivation of the beta-catenin transactivating complex"/>
</dbReference>
<dbReference type="Reactome" id="R-RNO-4641262">
    <property type="pathway name" value="Disassembly of the destruction complex and recruitment of AXIN to the membrane"/>
</dbReference>
<dbReference type="Reactome" id="R-RNO-5689896">
    <property type="pathway name" value="Ovarian tumor domain proteases"/>
</dbReference>
<dbReference type="PRO" id="PR:P70478"/>
<dbReference type="Proteomes" id="UP000002494">
    <property type="component" value="Unplaced"/>
</dbReference>
<dbReference type="GO" id="GO:0005912">
    <property type="term" value="C:adherens junction"/>
    <property type="evidence" value="ECO:0000266"/>
    <property type="project" value="RGD"/>
</dbReference>
<dbReference type="GO" id="GO:0030424">
    <property type="term" value="C:axon"/>
    <property type="evidence" value="ECO:0000266"/>
    <property type="project" value="RGD"/>
</dbReference>
<dbReference type="GO" id="GO:0044295">
    <property type="term" value="C:axonal growth cone"/>
    <property type="evidence" value="ECO:0000314"/>
    <property type="project" value="RGD"/>
</dbReference>
<dbReference type="GO" id="GO:0030877">
    <property type="term" value="C:beta-catenin destruction complex"/>
    <property type="evidence" value="ECO:0000250"/>
    <property type="project" value="UniProtKB"/>
</dbReference>
<dbReference type="GO" id="GO:0005923">
    <property type="term" value="C:bicellular tight junction"/>
    <property type="evidence" value="ECO:0000266"/>
    <property type="project" value="RGD"/>
</dbReference>
<dbReference type="GO" id="GO:0016342">
    <property type="term" value="C:catenin complex"/>
    <property type="evidence" value="ECO:0000266"/>
    <property type="project" value="RGD"/>
</dbReference>
<dbReference type="GO" id="GO:0070852">
    <property type="term" value="C:cell body fiber"/>
    <property type="evidence" value="ECO:0000314"/>
    <property type="project" value="RGD"/>
</dbReference>
<dbReference type="GO" id="GO:0005938">
    <property type="term" value="C:cell cortex"/>
    <property type="evidence" value="ECO:0000314"/>
    <property type="project" value="RGD"/>
</dbReference>
<dbReference type="GO" id="GO:0042995">
    <property type="term" value="C:cell projection"/>
    <property type="evidence" value="ECO:0000266"/>
    <property type="project" value="RGD"/>
</dbReference>
<dbReference type="GO" id="GO:0031253">
    <property type="term" value="C:cell projection membrane"/>
    <property type="evidence" value="ECO:0000266"/>
    <property type="project" value="RGD"/>
</dbReference>
<dbReference type="GO" id="GO:0005813">
    <property type="term" value="C:centrosome"/>
    <property type="evidence" value="ECO:0000250"/>
    <property type="project" value="UniProtKB"/>
</dbReference>
<dbReference type="GO" id="GO:0005737">
    <property type="term" value="C:cytoplasm"/>
    <property type="evidence" value="ECO:0000250"/>
    <property type="project" value="UniProtKB"/>
</dbReference>
<dbReference type="GO" id="GO:0030425">
    <property type="term" value="C:dendrite"/>
    <property type="evidence" value="ECO:0000314"/>
    <property type="project" value="RGD"/>
</dbReference>
<dbReference type="GO" id="GO:0098978">
    <property type="term" value="C:glutamatergic synapse"/>
    <property type="evidence" value="ECO:0000266"/>
    <property type="project" value="RGD"/>
</dbReference>
<dbReference type="GO" id="GO:0030426">
    <property type="term" value="C:growth cone"/>
    <property type="evidence" value="ECO:0000314"/>
    <property type="project" value="RGD"/>
</dbReference>
<dbReference type="GO" id="GO:0000776">
    <property type="term" value="C:kinetochore"/>
    <property type="evidence" value="ECO:0000250"/>
    <property type="project" value="UniProtKB"/>
</dbReference>
<dbReference type="GO" id="GO:0030027">
    <property type="term" value="C:lamellipodium"/>
    <property type="evidence" value="ECO:0000314"/>
    <property type="project" value="RGD"/>
</dbReference>
<dbReference type="GO" id="GO:0016328">
    <property type="term" value="C:lateral plasma membrane"/>
    <property type="evidence" value="ECO:0000314"/>
    <property type="project" value="UniProtKB"/>
</dbReference>
<dbReference type="GO" id="GO:0005874">
    <property type="term" value="C:microtubule"/>
    <property type="evidence" value="ECO:0000314"/>
    <property type="project" value="RGD"/>
</dbReference>
<dbReference type="GO" id="GO:0015630">
    <property type="term" value="C:microtubule cytoskeleton"/>
    <property type="evidence" value="ECO:0000266"/>
    <property type="project" value="RGD"/>
</dbReference>
<dbReference type="GO" id="GO:0044306">
    <property type="term" value="C:neuron projection terminus"/>
    <property type="evidence" value="ECO:0000314"/>
    <property type="project" value="RGD"/>
</dbReference>
<dbReference type="GO" id="GO:0043025">
    <property type="term" value="C:neuronal cell body"/>
    <property type="evidence" value="ECO:0000314"/>
    <property type="project" value="UniProtKB"/>
</dbReference>
<dbReference type="GO" id="GO:0031965">
    <property type="term" value="C:nuclear membrane"/>
    <property type="evidence" value="ECO:0000314"/>
    <property type="project" value="RGD"/>
</dbReference>
<dbReference type="GO" id="GO:0005634">
    <property type="term" value="C:nucleus"/>
    <property type="evidence" value="ECO:0000250"/>
    <property type="project" value="UniProtKB"/>
</dbReference>
<dbReference type="GO" id="GO:0048471">
    <property type="term" value="C:perinuclear region of cytoplasm"/>
    <property type="evidence" value="ECO:0000266"/>
    <property type="project" value="RGD"/>
</dbReference>
<dbReference type="GO" id="GO:0005886">
    <property type="term" value="C:plasma membrane"/>
    <property type="evidence" value="ECO:0000250"/>
    <property type="project" value="UniProtKB"/>
</dbReference>
<dbReference type="GO" id="GO:0098794">
    <property type="term" value="C:postsynapse"/>
    <property type="evidence" value="ECO:0000266"/>
    <property type="project" value="RGD"/>
</dbReference>
<dbReference type="GO" id="GO:0032991">
    <property type="term" value="C:protein-containing complex"/>
    <property type="evidence" value="ECO:0000314"/>
    <property type="project" value="RGD"/>
</dbReference>
<dbReference type="GO" id="GO:0032587">
    <property type="term" value="C:ruffle membrane"/>
    <property type="evidence" value="ECO:0000250"/>
    <property type="project" value="UniProtKB"/>
</dbReference>
<dbReference type="GO" id="GO:0034750">
    <property type="term" value="C:Scrib-APC-beta-catenin complex"/>
    <property type="evidence" value="ECO:0000266"/>
    <property type="project" value="RGD"/>
</dbReference>
<dbReference type="GO" id="GO:0030672">
    <property type="term" value="C:synaptic vesicle membrane"/>
    <property type="evidence" value="ECO:0000314"/>
    <property type="project" value="UniProtKB"/>
</dbReference>
<dbReference type="GO" id="GO:0008013">
    <property type="term" value="F:beta-catenin binding"/>
    <property type="evidence" value="ECO:0000250"/>
    <property type="project" value="UniProtKB"/>
</dbReference>
<dbReference type="GO" id="GO:0070840">
    <property type="term" value="F:dynein complex binding"/>
    <property type="evidence" value="ECO:0000266"/>
    <property type="project" value="RGD"/>
</dbReference>
<dbReference type="GO" id="GO:0045295">
    <property type="term" value="F:gamma-catenin binding"/>
    <property type="evidence" value="ECO:0000266"/>
    <property type="project" value="RGD"/>
</dbReference>
<dbReference type="GO" id="GO:0042802">
    <property type="term" value="F:identical protein binding"/>
    <property type="evidence" value="ECO:0000266"/>
    <property type="project" value="RGD"/>
</dbReference>
<dbReference type="GO" id="GO:0008017">
    <property type="term" value="F:microtubule binding"/>
    <property type="evidence" value="ECO:0000314"/>
    <property type="project" value="RGD"/>
</dbReference>
<dbReference type="GO" id="GO:0051010">
    <property type="term" value="F:microtubule plus-end binding"/>
    <property type="evidence" value="ECO:0000250"/>
    <property type="project" value="UniProtKB"/>
</dbReference>
<dbReference type="GO" id="GO:0002020">
    <property type="term" value="F:protease binding"/>
    <property type="evidence" value="ECO:0000266"/>
    <property type="project" value="RGD"/>
</dbReference>
<dbReference type="GO" id="GO:0019901">
    <property type="term" value="F:protein kinase binding"/>
    <property type="evidence" value="ECO:0000266"/>
    <property type="project" value="RGD"/>
</dbReference>
<dbReference type="GO" id="GO:0019887">
    <property type="term" value="F:protein kinase regulator activity"/>
    <property type="evidence" value="ECO:0000250"/>
    <property type="project" value="UniProtKB"/>
</dbReference>
<dbReference type="GO" id="GO:0044877">
    <property type="term" value="F:protein-containing complex binding"/>
    <property type="evidence" value="ECO:0000314"/>
    <property type="project" value="RGD"/>
</dbReference>
<dbReference type="GO" id="GO:0031625">
    <property type="term" value="F:ubiquitin protein ligase binding"/>
    <property type="evidence" value="ECO:0000266"/>
    <property type="project" value="RGD"/>
</dbReference>
<dbReference type="GO" id="GO:1990863">
    <property type="term" value="P:acinar cell proliferation"/>
    <property type="evidence" value="ECO:0000266"/>
    <property type="project" value="RGD"/>
</dbReference>
<dbReference type="GO" id="GO:0009952">
    <property type="term" value="P:anterior/posterior pattern specification"/>
    <property type="evidence" value="ECO:0000266"/>
    <property type="project" value="RGD"/>
</dbReference>
<dbReference type="GO" id="GO:0006915">
    <property type="term" value="P:apoptotic process"/>
    <property type="evidence" value="ECO:0000266"/>
    <property type="project" value="RGD"/>
</dbReference>
<dbReference type="GO" id="GO:0009798">
    <property type="term" value="P:axis specification"/>
    <property type="evidence" value="ECO:0000266"/>
    <property type="project" value="RGD"/>
</dbReference>
<dbReference type="GO" id="GO:0007409">
    <property type="term" value="P:axonogenesis"/>
    <property type="evidence" value="ECO:0000266"/>
    <property type="project" value="RGD"/>
</dbReference>
<dbReference type="GO" id="GO:0060070">
    <property type="term" value="P:canonical Wnt signaling pathway"/>
    <property type="evidence" value="ECO:0000266"/>
    <property type="project" value="RGD"/>
</dbReference>
<dbReference type="GO" id="GO:0044336">
    <property type="term" value="P:canonical Wnt signaling pathway involved in negative regulation of apoptotic process"/>
    <property type="evidence" value="ECO:0000266"/>
    <property type="project" value="RGD"/>
</dbReference>
<dbReference type="GO" id="GO:0044337">
    <property type="term" value="P:canonical Wnt signaling pathway involved in positive regulation of apoptotic process"/>
    <property type="evidence" value="ECO:0000266"/>
    <property type="project" value="RGD"/>
</dbReference>
<dbReference type="GO" id="GO:0007155">
    <property type="term" value="P:cell adhesion"/>
    <property type="evidence" value="ECO:0000266"/>
    <property type="project" value="RGD"/>
</dbReference>
<dbReference type="GO" id="GO:0051301">
    <property type="term" value="P:cell division"/>
    <property type="evidence" value="ECO:0000266"/>
    <property type="project" value="RGD"/>
</dbReference>
<dbReference type="GO" id="GO:0001708">
    <property type="term" value="P:cell fate specification"/>
    <property type="evidence" value="ECO:0000318"/>
    <property type="project" value="GO_Central"/>
</dbReference>
<dbReference type="GO" id="GO:0016477">
    <property type="term" value="P:cell migration"/>
    <property type="evidence" value="ECO:0000250"/>
    <property type="project" value="UniProtKB"/>
</dbReference>
<dbReference type="GO" id="GO:0008283">
    <property type="term" value="P:cell population proliferation"/>
    <property type="evidence" value="ECO:0000266"/>
    <property type="project" value="RGD"/>
</dbReference>
<dbReference type="GO" id="GO:1990090">
    <property type="term" value="P:cellular response to nerve growth factor stimulus"/>
    <property type="evidence" value="ECO:0000270"/>
    <property type="project" value="RGD"/>
</dbReference>
<dbReference type="GO" id="GO:0051276">
    <property type="term" value="P:chromosome organization"/>
    <property type="evidence" value="ECO:0000266"/>
    <property type="project" value="RGD"/>
</dbReference>
<dbReference type="GO" id="GO:0031122">
    <property type="term" value="P:cytoplasmic microtubule organization"/>
    <property type="evidence" value="ECO:0000266"/>
    <property type="project" value="RGD"/>
</dbReference>
<dbReference type="GO" id="GO:0006974">
    <property type="term" value="P:DNA damage response"/>
    <property type="evidence" value="ECO:0000250"/>
    <property type="project" value="UniProtKB"/>
</dbReference>
<dbReference type="GO" id="GO:0009953">
    <property type="term" value="P:dorsal/ventral pattern formation"/>
    <property type="evidence" value="ECO:0000266"/>
    <property type="project" value="RGD"/>
</dbReference>
<dbReference type="GO" id="GO:0001935">
    <property type="term" value="P:endothelial cell proliferation"/>
    <property type="evidence" value="ECO:0000266"/>
    <property type="project" value="RGD"/>
</dbReference>
<dbReference type="GO" id="GO:1904019">
    <property type="term" value="P:epithelial cell apoptotic process"/>
    <property type="evidence" value="ECO:0000266"/>
    <property type="project" value="RGD"/>
</dbReference>
<dbReference type="GO" id="GO:0050673">
    <property type="term" value="P:epithelial cell proliferation"/>
    <property type="evidence" value="ECO:0000266"/>
    <property type="project" value="RGD"/>
</dbReference>
<dbReference type="GO" id="GO:0060767">
    <property type="term" value="P:epithelial cell proliferation involved in prostate gland development"/>
    <property type="evidence" value="ECO:0000266"/>
    <property type="project" value="RGD"/>
</dbReference>
<dbReference type="GO" id="GO:0007163">
    <property type="term" value="P:establishment or maintenance of cell polarity"/>
    <property type="evidence" value="ECO:0000314"/>
    <property type="project" value="RGD"/>
</dbReference>
<dbReference type="GO" id="GO:0044346">
    <property type="term" value="P:fibroblast apoptotic process"/>
    <property type="evidence" value="ECO:0000266"/>
    <property type="project" value="RGD"/>
</dbReference>
<dbReference type="GO" id="GO:0010761">
    <property type="term" value="P:fibroblast migration"/>
    <property type="evidence" value="ECO:0000266"/>
    <property type="project" value="RGD"/>
</dbReference>
<dbReference type="GO" id="GO:0001942">
    <property type="term" value="P:hair follicle development"/>
    <property type="evidence" value="ECO:0000266"/>
    <property type="project" value="RGD"/>
</dbReference>
<dbReference type="GO" id="GO:0008286">
    <property type="term" value="P:insulin receptor signaling pathway"/>
    <property type="evidence" value="ECO:0000266"/>
    <property type="project" value="RGD"/>
</dbReference>
<dbReference type="GO" id="GO:0001822">
    <property type="term" value="P:kidney development"/>
    <property type="evidence" value="ECO:0000266"/>
    <property type="project" value="RGD"/>
</dbReference>
<dbReference type="GO" id="GO:0000165">
    <property type="term" value="P:MAPK cascade"/>
    <property type="evidence" value="ECO:0000266"/>
    <property type="project" value="RGD"/>
</dbReference>
<dbReference type="GO" id="GO:0007091">
    <property type="term" value="P:metaphase/anaphase transition of mitotic cell cycle"/>
    <property type="evidence" value="ECO:0000266"/>
    <property type="project" value="RGD"/>
</dbReference>
<dbReference type="GO" id="GO:0007019">
    <property type="term" value="P:microtubule depolymerization"/>
    <property type="evidence" value="ECO:0000266"/>
    <property type="project" value="RGD"/>
</dbReference>
<dbReference type="GO" id="GO:0046785">
    <property type="term" value="P:microtubule polymerization"/>
    <property type="evidence" value="ECO:0000266"/>
    <property type="project" value="RGD"/>
</dbReference>
<dbReference type="GO" id="GO:0000281">
    <property type="term" value="P:mitotic cytokinesis"/>
    <property type="evidence" value="ECO:0000266"/>
    <property type="project" value="RGD"/>
</dbReference>
<dbReference type="GO" id="GO:0007094">
    <property type="term" value="P:mitotic spindle assembly checkpoint signaling"/>
    <property type="evidence" value="ECO:0000266"/>
    <property type="project" value="RGD"/>
</dbReference>
<dbReference type="GO" id="GO:0046716">
    <property type="term" value="P:muscle cell cellular homeostasis"/>
    <property type="evidence" value="ECO:0000266"/>
    <property type="project" value="RGD"/>
</dbReference>
<dbReference type="GO" id="GO:1904698">
    <property type="term" value="P:negative regulation of acinar cell proliferation"/>
    <property type="evidence" value="ECO:0000266"/>
    <property type="project" value="RGD"/>
</dbReference>
<dbReference type="GO" id="GO:0043066">
    <property type="term" value="P:negative regulation of apoptotic process"/>
    <property type="evidence" value="ECO:0000266"/>
    <property type="project" value="RGD"/>
</dbReference>
<dbReference type="GO" id="GO:0090090">
    <property type="term" value="P:negative regulation of canonical Wnt signaling pathway"/>
    <property type="evidence" value="ECO:0000266"/>
    <property type="project" value="RGD"/>
</dbReference>
<dbReference type="GO" id="GO:0060044">
    <property type="term" value="P:negative regulation of cardiac muscle cell proliferation"/>
    <property type="evidence" value="ECO:0000315"/>
    <property type="project" value="BHF-UCL"/>
</dbReference>
<dbReference type="GO" id="GO:1902807">
    <property type="term" value="P:negative regulation of cell cycle G1/S phase transition"/>
    <property type="evidence" value="ECO:0000250"/>
    <property type="project" value="UniProtKB"/>
</dbReference>
<dbReference type="GO" id="GO:0008285">
    <property type="term" value="P:negative regulation of cell population proliferation"/>
    <property type="evidence" value="ECO:0000250"/>
    <property type="project" value="UniProtKB"/>
</dbReference>
<dbReference type="GO" id="GO:0045736">
    <property type="term" value="P:negative regulation of cyclin-dependent protein serine/threonine kinase activity"/>
    <property type="evidence" value="ECO:0000250"/>
    <property type="project" value="UniProtKB"/>
</dbReference>
<dbReference type="GO" id="GO:0001937">
    <property type="term" value="P:negative regulation of endothelial cell proliferation"/>
    <property type="evidence" value="ECO:0000266"/>
    <property type="project" value="RGD"/>
</dbReference>
<dbReference type="GO" id="GO:1904036">
    <property type="term" value="P:negative regulation of epithelial cell apoptotic process"/>
    <property type="evidence" value="ECO:0000266"/>
    <property type="project" value="RGD"/>
</dbReference>
<dbReference type="GO" id="GO:0050680">
    <property type="term" value="P:negative regulation of epithelial cell proliferation"/>
    <property type="evidence" value="ECO:0000266"/>
    <property type="project" value="RGD"/>
</dbReference>
<dbReference type="GO" id="GO:0060770">
    <property type="term" value="P:negative regulation of epithelial cell proliferation involved in prostate gland development"/>
    <property type="evidence" value="ECO:0000266"/>
    <property type="project" value="RGD"/>
</dbReference>
<dbReference type="GO" id="GO:2000134">
    <property type="term" value="P:negative regulation of G1/S transition of mitotic cell cycle"/>
    <property type="evidence" value="ECO:0000266"/>
    <property type="project" value="RGD"/>
</dbReference>
<dbReference type="GO" id="GO:0043409">
    <property type="term" value="P:negative regulation of MAPK cascade"/>
    <property type="evidence" value="ECO:0000266"/>
    <property type="project" value="RGD"/>
</dbReference>
<dbReference type="GO" id="GO:0007026">
    <property type="term" value="P:negative regulation of microtubule depolymerization"/>
    <property type="evidence" value="ECO:0000250"/>
    <property type="project" value="UniProtKB"/>
</dbReference>
<dbReference type="GO" id="GO:0042483">
    <property type="term" value="P:negative regulation of odontogenesis"/>
    <property type="evidence" value="ECO:0000266"/>
    <property type="project" value="RGD"/>
</dbReference>
<dbReference type="GO" id="GO:0030178">
    <property type="term" value="P:negative regulation of Wnt signaling pathway"/>
    <property type="evidence" value="ECO:0000266"/>
    <property type="project" value="RGD"/>
</dbReference>
<dbReference type="GO" id="GO:0007399">
    <property type="term" value="P:nervous system development"/>
    <property type="evidence" value="ECO:0000318"/>
    <property type="project" value="GO_Central"/>
</dbReference>
<dbReference type="GO" id="GO:0031175">
    <property type="term" value="P:neuron projection development"/>
    <property type="evidence" value="ECO:0000315"/>
    <property type="project" value="RGD"/>
</dbReference>
<dbReference type="GO" id="GO:0071941">
    <property type="term" value="P:nitrogen cycle metabolic process"/>
    <property type="evidence" value="ECO:0000266"/>
    <property type="project" value="RGD"/>
</dbReference>
<dbReference type="GO" id="GO:0042476">
    <property type="term" value="P:odontogenesis"/>
    <property type="evidence" value="ECO:0000266"/>
    <property type="project" value="RGD"/>
</dbReference>
<dbReference type="GO" id="GO:0031016">
    <property type="term" value="P:pancreas development"/>
    <property type="evidence" value="ECO:0000270"/>
    <property type="project" value="RGD"/>
</dbReference>
<dbReference type="GO" id="GO:0007389">
    <property type="term" value="P:pattern specification process"/>
    <property type="evidence" value="ECO:0000266"/>
    <property type="project" value="RGD"/>
</dbReference>
<dbReference type="GO" id="GO:0043065">
    <property type="term" value="P:positive regulation of apoptotic process"/>
    <property type="evidence" value="ECO:0000266"/>
    <property type="project" value="RGD"/>
</dbReference>
<dbReference type="GO" id="GO:0045785">
    <property type="term" value="P:positive regulation of cell adhesion"/>
    <property type="evidence" value="ECO:0000266"/>
    <property type="project" value="RGD"/>
</dbReference>
<dbReference type="GO" id="GO:0045597">
    <property type="term" value="P:positive regulation of cell differentiation"/>
    <property type="evidence" value="ECO:0000266"/>
    <property type="project" value="RGD"/>
</dbReference>
<dbReference type="GO" id="GO:0051781">
    <property type="term" value="P:positive regulation of cell division"/>
    <property type="evidence" value="ECO:0000266"/>
    <property type="project" value="RGD"/>
</dbReference>
<dbReference type="GO" id="GO:0030335">
    <property type="term" value="P:positive regulation of cell migration"/>
    <property type="evidence" value="ECO:0000266"/>
    <property type="project" value="RGD"/>
</dbReference>
<dbReference type="GO" id="GO:0120162">
    <property type="term" value="P:positive regulation of cold-induced thermogenesis"/>
    <property type="evidence" value="ECO:0000250"/>
    <property type="project" value="YuBioLab"/>
</dbReference>
<dbReference type="GO" id="GO:2000271">
    <property type="term" value="P:positive regulation of fibroblast apoptotic process"/>
    <property type="evidence" value="ECO:0000266"/>
    <property type="project" value="RGD"/>
</dbReference>
<dbReference type="GO" id="GO:0010763">
    <property type="term" value="P:positive regulation of fibroblast migration"/>
    <property type="evidence" value="ECO:0000266"/>
    <property type="project" value="RGD"/>
</dbReference>
<dbReference type="GO" id="GO:0031116">
    <property type="term" value="P:positive regulation of microtubule polymerization"/>
    <property type="evidence" value="ECO:0000266"/>
    <property type="project" value="RGD"/>
</dbReference>
<dbReference type="GO" id="GO:0045732">
    <property type="term" value="P:positive regulation of protein catabolic process"/>
    <property type="evidence" value="ECO:0000266"/>
    <property type="project" value="RGD"/>
</dbReference>
<dbReference type="GO" id="GO:1904781">
    <property type="term" value="P:positive regulation of protein localization to centrosome"/>
    <property type="evidence" value="ECO:0000266"/>
    <property type="project" value="RGD"/>
</dbReference>
<dbReference type="GO" id="GO:0031274">
    <property type="term" value="P:positive regulation of pseudopodium assembly"/>
    <property type="evidence" value="ECO:0000266"/>
    <property type="project" value="RGD"/>
</dbReference>
<dbReference type="GO" id="GO:0030163">
    <property type="term" value="P:protein catabolic process"/>
    <property type="evidence" value="ECO:0000266"/>
    <property type="project" value="RGD"/>
</dbReference>
<dbReference type="GO" id="GO:0065003">
    <property type="term" value="P:protein-containing complex assembly"/>
    <property type="evidence" value="ECO:0000250"/>
    <property type="project" value="UniProtKB"/>
</dbReference>
<dbReference type="GO" id="GO:0009954">
    <property type="term" value="P:proximal/distal pattern formation"/>
    <property type="evidence" value="ECO:0000266"/>
    <property type="project" value="RGD"/>
</dbReference>
<dbReference type="GO" id="GO:0051988">
    <property type="term" value="P:regulation of attachment of spindle microtubules to kinetochore"/>
    <property type="evidence" value="ECO:0000266"/>
    <property type="project" value="RGD"/>
</dbReference>
<dbReference type="GO" id="GO:0051726">
    <property type="term" value="P:regulation of cell cycle"/>
    <property type="evidence" value="ECO:0000266"/>
    <property type="project" value="RGD"/>
</dbReference>
<dbReference type="GO" id="GO:0045595">
    <property type="term" value="P:regulation of cell differentiation"/>
    <property type="evidence" value="ECO:0000266"/>
    <property type="project" value="RGD"/>
</dbReference>
<dbReference type="GO" id="GO:0030334">
    <property type="term" value="P:regulation of cell migration"/>
    <property type="evidence" value="ECO:0000266"/>
    <property type="project" value="RGD"/>
</dbReference>
<dbReference type="GO" id="GO:0030856">
    <property type="term" value="P:regulation of epithelial cell differentiation"/>
    <property type="evidence" value="ECO:0000266"/>
    <property type="project" value="RGD"/>
</dbReference>
<dbReference type="GO" id="GO:0010632">
    <property type="term" value="P:regulation of epithelial cell migration"/>
    <property type="evidence" value="ECO:0000266"/>
    <property type="project" value="RGD"/>
</dbReference>
<dbReference type="GO" id="GO:2000211">
    <property type="term" value="P:regulation of glutamate metabolic process"/>
    <property type="evidence" value="ECO:0000314"/>
    <property type="project" value="RGD"/>
</dbReference>
<dbReference type="GO" id="GO:0060632">
    <property type="term" value="P:regulation of microtubule-based movement"/>
    <property type="evidence" value="ECO:0000266"/>
    <property type="project" value="RGD"/>
</dbReference>
<dbReference type="GO" id="GO:0032886">
    <property type="term" value="P:regulation of microtubule-based process"/>
    <property type="evidence" value="ECO:0000250"/>
    <property type="project" value="UniProtKB"/>
</dbReference>
<dbReference type="GO" id="GO:0045667">
    <property type="term" value="P:regulation of osteoblast differentiation"/>
    <property type="evidence" value="ECO:0000266"/>
    <property type="project" value="RGD"/>
</dbReference>
<dbReference type="GO" id="GO:0045670">
    <property type="term" value="P:regulation of osteoclast differentiation"/>
    <property type="evidence" value="ECO:0000266"/>
    <property type="project" value="RGD"/>
</dbReference>
<dbReference type="GO" id="GO:0097305">
    <property type="term" value="P:response to alcohol"/>
    <property type="evidence" value="ECO:0000270"/>
    <property type="project" value="RGD"/>
</dbReference>
<dbReference type="GO" id="GO:0009410">
    <property type="term" value="P:response to xenobiotic stimulus"/>
    <property type="evidence" value="ECO:0000270"/>
    <property type="project" value="RGD"/>
</dbReference>
<dbReference type="GO" id="GO:0060041">
    <property type="term" value="P:retina development in camera-type eye"/>
    <property type="evidence" value="ECO:0000266"/>
    <property type="project" value="RGD"/>
</dbReference>
<dbReference type="GO" id="GO:0043588">
    <property type="term" value="P:skin development"/>
    <property type="evidence" value="ECO:0000266"/>
    <property type="project" value="RGD"/>
</dbReference>
<dbReference type="GO" id="GO:0035019">
    <property type="term" value="P:somatic stem cell population maintenance"/>
    <property type="evidence" value="ECO:0000266"/>
    <property type="project" value="RGD"/>
</dbReference>
<dbReference type="GO" id="GO:0019827">
    <property type="term" value="P:stem cell population maintenance"/>
    <property type="evidence" value="ECO:0000266"/>
    <property type="project" value="RGD"/>
</dbReference>
<dbReference type="GO" id="GO:0033077">
    <property type="term" value="P:T cell differentiation in thymus"/>
    <property type="evidence" value="ECO:0000266"/>
    <property type="project" value="RGD"/>
</dbReference>
<dbReference type="GO" id="GO:0048538">
    <property type="term" value="P:thymus development"/>
    <property type="evidence" value="ECO:0000266"/>
    <property type="project" value="RGD"/>
</dbReference>
<dbReference type="GO" id="GO:0016055">
    <property type="term" value="P:Wnt signaling pathway"/>
    <property type="evidence" value="ECO:0000266"/>
    <property type="project" value="RGD"/>
</dbReference>
<dbReference type="FunFam" id="1.25.10.10:FF:000035">
    <property type="entry name" value="adenomatous polyposis coli protein 2"/>
    <property type="match status" value="1"/>
</dbReference>
<dbReference type="FunFam" id="1.10.287.450:FF:000001">
    <property type="entry name" value="adenomatous polyposis coli protein isoform X1"/>
    <property type="match status" value="1"/>
</dbReference>
<dbReference type="Gene3D" id="1.20.5.10">
    <property type="match status" value="1"/>
</dbReference>
<dbReference type="Gene3D" id="1.10.287.450">
    <property type="entry name" value="Helix hairpin bin"/>
    <property type="match status" value="1"/>
</dbReference>
<dbReference type="Gene3D" id="1.25.10.10">
    <property type="entry name" value="Leucine-rich Repeat Variant"/>
    <property type="match status" value="1"/>
</dbReference>
<dbReference type="InterPro" id="IPR009240">
    <property type="entry name" value="APC_15aa_rpt"/>
</dbReference>
<dbReference type="InterPro" id="IPR009234">
    <property type="entry name" value="APC_basic_dom"/>
</dbReference>
<dbReference type="InterPro" id="IPR026831">
    <property type="entry name" value="APC_dom"/>
</dbReference>
<dbReference type="InterPro" id="IPR026818">
    <property type="entry name" value="Apc_fam"/>
</dbReference>
<dbReference type="InterPro" id="IPR032038">
    <property type="entry name" value="APC_N"/>
</dbReference>
<dbReference type="InterPro" id="IPR036149">
    <property type="entry name" value="APC_N_sf"/>
</dbReference>
<dbReference type="InterPro" id="IPR041257">
    <property type="entry name" value="APC_rep"/>
</dbReference>
<dbReference type="InterPro" id="IPR009223">
    <property type="entry name" value="APC_rpt"/>
</dbReference>
<dbReference type="InterPro" id="IPR011989">
    <property type="entry name" value="ARM-like"/>
</dbReference>
<dbReference type="InterPro" id="IPR016024">
    <property type="entry name" value="ARM-type_fold"/>
</dbReference>
<dbReference type="InterPro" id="IPR000225">
    <property type="entry name" value="Armadillo"/>
</dbReference>
<dbReference type="InterPro" id="IPR009232">
    <property type="entry name" value="EB1-bd"/>
</dbReference>
<dbReference type="InterPro" id="IPR009224">
    <property type="entry name" value="SAMP"/>
</dbReference>
<dbReference type="PANTHER" id="PTHR12607:SF11">
    <property type="entry name" value="ADENOMATOUS POLYPOSIS COLI PROTEIN"/>
    <property type="match status" value="1"/>
</dbReference>
<dbReference type="PANTHER" id="PTHR12607">
    <property type="entry name" value="ADENOMATOUS POLYPOSIS COLI PROTEIN FAMILY"/>
    <property type="match status" value="1"/>
</dbReference>
<dbReference type="Pfam" id="PF05972">
    <property type="entry name" value="APC_15aa"/>
    <property type="match status" value="4"/>
</dbReference>
<dbReference type="Pfam" id="PF05956">
    <property type="entry name" value="APC_basic"/>
    <property type="match status" value="1"/>
</dbReference>
<dbReference type="Pfam" id="PF16689">
    <property type="entry name" value="APC_N_CC"/>
    <property type="match status" value="1"/>
</dbReference>
<dbReference type="Pfam" id="PF05923">
    <property type="entry name" value="APC_r"/>
    <property type="match status" value="7"/>
</dbReference>
<dbReference type="Pfam" id="PF18797">
    <property type="entry name" value="APC_rep"/>
    <property type="match status" value="1"/>
</dbReference>
<dbReference type="Pfam" id="PF16634">
    <property type="entry name" value="APC_u13"/>
    <property type="match status" value="1"/>
</dbReference>
<dbReference type="Pfam" id="PF16635">
    <property type="entry name" value="APC_u14"/>
    <property type="match status" value="1"/>
</dbReference>
<dbReference type="Pfam" id="PF16636">
    <property type="entry name" value="APC_u15"/>
    <property type="match status" value="1"/>
</dbReference>
<dbReference type="Pfam" id="PF16630">
    <property type="entry name" value="APC_u5"/>
    <property type="match status" value="1"/>
</dbReference>
<dbReference type="Pfam" id="PF16633">
    <property type="entry name" value="APC_u9"/>
    <property type="match status" value="1"/>
</dbReference>
<dbReference type="Pfam" id="PF00514">
    <property type="entry name" value="Arm"/>
    <property type="match status" value="3"/>
</dbReference>
<dbReference type="Pfam" id="PF16629">
    <property type="entry name" value="Arm_APC_u3"/>
    <property type="match status" value="1"/>
</dbReference>
<dbReference type="Pfam" id="PF05937">
    <property type="entry name" value="EB1_binding"/>
    <property type="match status" value="1"/>
</dbReference>
<dbReference type="Pfam" id="PF05924">
    <property type="entry name" value="SAMP"/>
    <property type="match status" value="3"/>
</dbReference>
<dbReference type="Pfam" id="PF11414">
    <property type="entry name" value="Suppressor_APC"/>
    <property type="match status" value="1"/>
</dbReference>
<dbReference type="SMART" id="SM00185">
    <property type="entry name" value="ARM"/>
    <property type="match status" value="7"/>
</dbReference>
<dbReference type="SUPFAM" id="SSF48371">
    <property type="entry name" value="ARM repeat"/>
    <property type="match status" value="1"/>
</dbReference>
<dbReference type="SUPFAM" id="SSF58050">
    <property type="entry name" value="N-terminal coiled coil domain from apc"/>
    <property type="match status" value="1"/>
</dbReference>
<dbReference type="SUPFAM" id="SSF82931">
    <property type="entry name" value="Tumor suppressor gene product Apc"/>
    <property type="match status" value="1"/>
</dbReference>
<dbReference type="PROSITE" id="PS50176">
    <property type="entry name" value="ARM_REPEAT"/>
    <property type="match status" value="1"/>
</dbReference>
<comment type="function">
    <text evidence="2 3">Tumor suppressor. Promotes rapid degradation of CTNNB1 and participates in Wnt signaling as a negative regulator. APC activity is correlated with its phosphorylation state. Activates the GEF activity of SPATA13 and ARHGEF4. Plays a role in hepatocyte growth factor (HGF)-induced cell migration (By similarity). Required for MMP9 up-regulation via the JNK signaling pathway in colorectal tumor cells (By similarity). Associates with both microtubules and actin filaments, components of the cytoskeleton (By similarity). Plays a role in mediating the organization of F-actin into ordered bundles (By similarity). Functions downstream of Rho GTPases and DIAPH1 to selectively stabilize microtubules (By similarity). Acts as a mediator of ERBB2-dependent stabilization of microtubules at the cell cortex. It is required for the localization of MACF1 to the cell membrane and this localization of MACF1 is critical for its function in microtubule stabilization (By similarity).</text>
</comment>
<comment type="subunit">
    <text evidence="2 3 6 8">Forms homooligomers (Probable). Found in a complex consisting of ARHGEF4, APC and CTNNB1 (By similarity). Found in a complex composed of MACF1, APC, AXIN1, CTNNB1 and GSK3B (PubMed:16815997). The complex composed, at least, of APC, CTNNB1 and GSK3B interacts with JPT1; the interaction requires the inactive form of GSK3B (phosphorylated at 'Ser-9') (By similarity). Interacts with APC2 (By similarity). Interacts with DLG1 (via PDZ domains) and DLG3 (via PDZ domains) (By similarity). Interacts with alpha- and beta-catenins (By similarity). Interacts with AXIN1 (via RGS domain) (By similarity). Interacts with ARHGEF4 (via N-terminus) (By similarity). Interacts (via C-terminal residues 2674-2843) with MAPRE1 (via C-terminal residues 206-211); the interaction inhibits association with and bundling of F-actin (By similarity). Interacts with MAPRE2 and MAPRE3 (via C-terminus) (By similarity). Interacts with DIAPH1; DIAPH1 acts as a scaffold protein for MAPRE1 and APC to stabilize microtubules and promote cell migration (By similarity). Interacts with DIAPH2 (By similarity). Interacts with SCRIB; may mediate APC targeting to adherens junctions of epithelial cells (By similarity). Interacts with SPATA13 (via N-terminus and SH3 domain) (By similarity). Interacts with ASAP1 (via SH3 domain) (By similarity). Interacts (at the cell membrane) with AMER1 and AMER2 (via ARM repeats) (By similarity). Interacts with KHDRBS1 (By similarity). Interacts with actin; binds both to F-actin and actin filament bundles (By similarity).</text>
</comment>
<comment type="interaction">
    <interactant intactId="EBI-631663">
        <id>P70478</id>
    </interactant>
    <interactant intactId="EBI-375655">
        <id>P31016</id>
        <label>Dlg4</label>
    </interactant>
    <organismsDiffer>false</organismsDiffer>
    <experiments>2</experiments>
</comment>
<comment type="subcellular location">
    <subcellularLocation>
        <location evidence="2">Cell junction</location>
        <location evidence="2">Adherens junction</location>
    </subcellularLocation>
    <subcellularLocation>
        <location evidence="2">Cytoplasm</location>
        <location evidence="2">Cytoskeleton</location>
    </subcellularLocation>
    <subcellularLocation>
        <location evidence="2">Cell projection</location>
        <location evidence="2">Lamellipodium</location>
    </subcellularLocation>
    <subcellularLocation>
        <location evidence="2">Cell projection</location>
        <location evidence="2">Ruffle membrane</location>
    </subcellularLocation>
    <subcellularLocation>
        <location evidence="2">Cytoplasm</location>
    </subcellularLocation>
    <subcellularLocation>
        <location evidence="2">Cell membrane</location>
    </subcellularLocation>
    <text evidence="2">Associated with the microtubule network at the growing distal tip of microtubules. MAPRE1 may be required for targeting to the growing microtubule plus ends. Accumulates in the lamellipodium and ruffle membrane in response to hepatocyte growth factor (HGF) treatment. The MEMO1-RHOA-DIAPH1 signaling pathway controls localization of the phosphorylated form to the cell membrane.</text>
</comment>
<comment type="domain">
    <text evidence="1">The microtubule tip localization signal (MtLS) motif; mediates interaction with MAPRE1 and targeting to the growing microtubule plus ends.</text>
</comment>
<comment type="domain">
    <text evidence="2">The basic region (residues 2167-2674) mediates the association with both microtubule and actin proteins and promotes the bundling of F-actin.</text>
</comment>
<comment type="PTM">
    <text evidence="1 2">Phosphorylated; phosphorylation enhances the F-actin bundling activity (By similarity). Phosphorylated by GSK3B.</text>
</comment>
<comment type="PTM">
    <text evidence="1">Ubiquitinated, leading to its degradation by the proteasome. Ubiquitination is facilitated by Axin. Deubiquitinated by ZRANB1/TRABID (By similarity).</text>
</comment>
<comment type="similarity">
    <text evidence="8">Belongs to the adenomatous polyposis coli (APC) family.</text>
</comment>
<reference key="1">
    <citation type="journal article" date="1995" name="Mamm. Genome">
        <title>cDNA cloning of the rat APC gene and assignment to chromosome 18.</title>
        <authorList>
            <person name="Toyota M."/>
            <person name="Ushijima T."/>
            <person name="Kakiuchi H."/>
            <person name="Watanabe M."/>
            <person name="Imai K."/>
            <person name="Yachi A."/>
            <person name="Sugimura T."/>
            <person name="Nagao M."/>
        </authorList>
    </citation>
    <scope>NUCLEOTIDE SEQUENCE [MRNA]</scope>
    <source>
        <strain>Fischer 344/N</strain>
        <tissue>Brain</tissue>
    </source>
</reference>
<reference key="2">
    <citation type="journal article" date="1995" name="Proc. Natl. Acad. Sci. U.S.A.">
        <title>Specific 5'-GGGA-3'--&gt;5'-GGA-3' mutation of the Apc gene in rat colon tumors induced by 2-amino-1-methyl-6-phenylimidazo[4,5-b]pyridine.</title>
        <authorList>
            <person name="Kakiuchi H."/>
            <person name="Watanabe M."/>
            <person name="Ushijima T."/>
            <person name="Toyota M."/>
            <person name="Imai K."/>
            <person name="Weisburger J.H."/>
            <person name="Sugimura T."/>
            <person name="Nagao M."/>
        </authorList>
    </citation>
    <scope>MUTAGENESIS</scope>
    <source>
        <strain>Fischer 344/N</strain>
        <strain>Sprague-Dawley</strain>
    </source>
</reference>
<reference key="3">
    <citation type="journal article" date="2006" name="Genes Dev.">
        <title>The role of microtubule actin cross-linking factor 1 (MACF1) in the Wnt signaling pathway.</title>
        <authorList>
            <person name="Chen H.J."/>
            <person name="Lin C.M."/>
            <person name="Lin C.S."/>
            <person name="Perez-Olle R."/>
            <person name="Leung C.L."/>
            <person name="Liem R.K."/>
        </authorList>
    </citation>
    <scope>IDENTIFICATION IN A COMPLEX WITH MACF1; CTNNB1; AXIN1 AND GSK3B</scope>
</reference>
<reference key="4">
    <citation type="journal article" date="2006" name="Proc. Natl. Acad. Sci. U.S.A.">
        <title>Quantitative phosphoproteomics of vasopressin-sensitive renal cells: regulation of aquaporin-2 phosphorylation at two sites.</title>
        <authorList>
            <person name="Hoffert J.D."/>
            <person name="Pisitkun T."/>
            <person name="Wang G."/>
            <person name="Shen R.-F."/>
            <person name="Knepper M.A."/>
        </authorList>
    </citation>
    <scope>PHOSPHORYLATION [LARGE SCALE ANALYSIS] AT SER-1714</scope>
    <scope>IDENTIFICATION BY MASS SPECTROMETRY [LARGE SCALE ANALYSIS]</scope>
</reference>
<reference key="5">
    <citation type="journal article" date="2012" name="Nat. Commun.">
        <title>Quantitative maps of protein phosphorylation sites across 14 different rat organs and tissues.</title>
        <authorList>
            <person name="Lundby A."/>
            <person name="Secher A."/>
            <person name="Lage K."/>
            <person name="Nordsborg N.B."/>
            <person name="Dmytriyev A."/>
            <person name="Lundby C."/>
            <person name="Olsen J.V."/>
        </authorList>
    </citation>
    <scope>PHOSPHORYLATION [LARGE SCALE ANALYSIS] AT SER-742; SER-778; SER-985; SER-1040; SER-1368; SER-1565; SER-1859; SER-2087; SER-2092; SER-2129; SER-2130; SER-2132 AND SER-2710</scope>
    <scope>IDENTIFICATION BY MASS SPECTROMETRY [LARGE SCALE ANALYSIS]</scope>
</reference>
<keyword id="KW-0007">Acetylation</keyword>
<keyword id="KW-0965">Cell junction</keyword>
<keyword id="KW-1003">Cell membrane</keyword>
<keyword id="KW-0966">Cell projection</keyword>
<keyword id="KW-0175">Coiled coil</keyword>
<keyword id="KW-0963">Cytoplasm</keyword>
<keyword id="KW-0206">Cytoskeleton</keyword>
<keyword id="KW-0472">Membrane</keyword>
<keyword id="KW-0493">Microtubule</keyword>
<keyword id="KW-0597">Phosphoprotein</keyword>
<keyword id="KW-1185">Reference proteome</keyword>
<keyword id="KW-0677">Repeat</keyword>
<keyword id="KW-0043">Tumor suppressor</keyword>
<keyword id="KW-0832">Ubl conjugation</keyword>
<keyword id="KW-0879">Wnt signaling pathway</keyword>
<feature type="initiator methionine" description="Removed" evidence="2">
    <location>
        <position position="1"/>
    </location>
</feature>
<feature type="chain" id="PRO_0000064629" description="Adenomatous polyposis coli protein">
    <location>
        <begin position="2"/>
        <end position="2842"/>
    </location>
</feature>
<feature type="repeat" description="ARM 1">
    <location>
        <begin position="451"/>
        <end position="493"/>
    </location>
</feature>
<feature type="repeat" description="ARM 2">
    <location>
        <begin position="503"/>
        <end position="545"/>
    </location>
</feature>
<feature type="repeat" description="ARM 3">
    <location>
        <begin position="546"/>
        <end position="589"/>
    </location>
</feature>
<feature type="repeat" description="ARM 4">
    <location>
        <begin position="590"/>
        <end position="636"/>
    </location>
</feature>
<feature type="repeat" description="ARM 5">
    <location>
        <begin position="637"/>
        <end position="681"/>
    </location>
</feature>
<feature type="repeat" description="ARM 6">
    <location>
        <begin position="682"/>
        <end position="723"/>
    </location>
</feature>
<feature type="repeat" description="ARM 7">
    <location>
        <begin position="724"/>
        <end position="765"/>
    </location>
</feature>
<feature type="region of interest" description="Disordered" evidence="5">
    <location>
        <begin position="238"/>
        <end position="304"/>
    </location>
</feature>
<feature type="region of interest" description="Disordered" evidence="5">
    <location>
        <begin position="828"/>
        <end position="877"/>
    </location>
</feature>
<feature type="region of interest" description="Disordered" evidence="5">
    <location>
        <begin position="921"/>
        <end position="942"/>
    </location>
</feature>
<feature type="region of interest" description="Disordered" evidence="5">
    <location>
        <begin position="956"/>
        <end position="988"/>
    </location>
</feature>
<feature type="region of interest" description="Interaction with catenins" evidence="2">
    <location>
        <begin position="1018"/>
        <end position="1167"/>
    </location>
</feature>
<feature type="region of interest" description="Disordered" evidence="5">
    <location>
        <begin position="1058"/>
        <end position="1078"/>
    </location>
</feature>
<feature type="region of interest" description="Disordered" evidence="5">
    <location>
        <begin position="1092"/>
        <end position="1166"/>
    </location>
</feature>
<feature type="region of interest" description="Disordered" evidence="5">
    <location>
        <begin position="1188"/>
        <end position="1249"/>
    </location>
</feature>
<feature type="region of interest" description="Disordered" evidence="5">
    <location>
        <begin position="1306"/>
        <end position="1373"/>
    </location>
</feature>
<feature type="region of interest" description="Disordered" evidence="5">
    <location>
        <begin position="1398"/>
        <end position="1474"/>
    </location>
</feature>
<feature type="region of interest" description="Disordered" evidence="5">
    <location>
        <begin position="1525"/>
        <end position="1568"/>
    </location>
</feature>
<feature type="region of interest" description="Disordered" evidence="5">
    <location>
        <begin position="1584"/>
        <end position="1609"/>
    </location>
</feature>
<feature type="region of interest" description="Disordered" evidence="5">
    <location>
        <begin position="1661"/>
        <end position="1711"/>
    </location>
</feature>
<feature type="region of interest" description="Disordered" evidence="5">
    <location>
        <begin position="1748"/>
        <end position="1950"/>
    </location>
</feature>
<feature type="region of interest" description="Highly charged">
    <location>
        <begin position="1864"/>
        <end position="1891"/>
    </location>
</feature>
<feature type="region of interest" description="Disordered" evidence="5">
    <location>
        <begin position="1963"/>
        <end position="2010"/>
    </location>
</feature>
<feature type="region of interest" description="Interaction with AXIN1" evidence="2">
    <location>
        <begin position="2034"/>
        <end position="2058"/>
    </location>
</feature>
<feature type="region of interest" description="Disordered" evidence="5">
    <location>
        <begin position="2043"/>
        <end position="2067"/>
    </location>
</feature>
<feature type="region of interest" description="Disordered" evidence="5">
    <location>
        <begin position="2148"/>
        <end position="2173"/>
    </location>
</feature>
<feature type="region of interest" description="Basic region" evidence="2">
    <location>
        <begin position="2167"/>
        <end position="2674"/>
    </location>
</feature>
<feature type="region of interest" description="Disordered" evidence="5">
    <location>
        <begin position="2234"/>
        <end position="2641"/>
    </location>
</feature>
<feature type="region of interest" description="Interaction with DLG1" evidence="2">
    <location>
        <begin position="2475"/>
        <end position="2842"/>
    </location>
</feature>
<feature type="region of interest" description="Disordered" evidence="5">
    <location>
        <begin position="2664"/>
        <end position="2842"/>
    </location>
</feature>
<feature type="region of interest" description="Interaction with MAPRE1" evidence="2">
    <location>
        <begin position="2674"/>
        <end position="2842"/>
    </location>
</feature>
<feature type="coiled-coil region" evidence="4">
    <location>
        <begin position="2"/>
        <end position="62"/>
    </location>
</feature>
<feature type="coiled-coil region" evidence="4">
    <location>
        <begin position="125"/>
        <end position="260"/>
    </location>
</feature>
<feature type="short sequence motif" description="Microtubule tip localization signal">
    <location>
        <begin position="2802"/>
        <end position="2805"/>
    </location>
</feature>
<feature type="short sequence motif" description="PDZ-binding" evidence="1">
    <location>
        <begin position="2840"/>
        <end position="2842"/>
    </location>
</feature>
<feature type="compositionally biased region" description="Basic and acidic residues" evidence="5">
    <location>
        <begin position="239"/>
        <end position="259"/>
    </location>
</feature>
<feature type="compositionally biased region" description="Polar residues" evidence="5">
    <location>
        <begin position="268"/>
        <end position="279"/>
    </location>
</feature>
<feature type="compositionally biased region" description="Low complexity" evidence="5">
    <location>
        <begin position="831"/>
        <end position="841"/>
    </location>
</feature>
<feature type="compositionally biased region" description="Basic and acidic residues" evidence="5">
    <location>
        <begin position="842"/>
        <end position="855"/>
    </location>
</feature>
<feature type="compositionally biased region" description="Polar residues" evidence="5">
    <location>
        <begin position="860"/>
        <end position="877"/>
    </location>
</feature>
<feature type="compositionally biased region" description="Polar residues" evidence="5">
    <location>
        <begin position="931"/>
        <end position="942"/>
    </location>
</feature>
<feature type="compositionally biased region" description="Low complexity" evidence="5">
    <location>
        <begin position="959"/>
        <end position="969"/>
    </location>
</feature>
<feature type="compositionally biased region" description="Polar residues" evidence="5">
    <location>
        <begin position="1066"/>
        <end position="1078"/>
    </location>
</feature>
<feature type="compositionally biased region" description="Polar residues" evidence="5">
    <location>
        <begin position="1103"/>
        <end position="1128"/>
    </location>
</feature>
<feature type="compositionally biased region" description="Basic and acidic residues" evidence="5">
    <location>
        <begin position="1144"/>
        <end position="1157"/>
    </location>
</feature>
<feature type="compositionally biased region" description="Low complexity" evidence="5">
    <location>
        <begin position="1188"/>
        <end position="1200"/>
    </location>
</feature>
<feature type="compositionally biased region" description="Low complexity" evidence="5">
    <location>
        <begin position="1209"/>
        <end position="1223"/>
    </location>
</feature>
<feature type="compositionally biased region" description="Polar residues" evidence="5">
    <location>
        <begin position="1224"/>
        <end position="1242"/>
    </location>
</feature>
<feature type="compositionally biased region" description="Polar residues" evidence="5">
    <location>
        <begin position="1323"/>
        <end position="1340"/>
    </location>
</feature>
<feature type="compositionally biased region" description="Low complexity" evidence="5">
    <location>
        <begin position="1352"/>
        <end position="1363"/>
    </location>
</feature>
<feature type="compositionally biased region" description="Pro residues" evidence="5">
    <location>
        <begin position="1435"/>
        <end position="1444"/>
    </location>
</feature>
<feature type="compositionally biased region" description="Acidic residues" evidence="5">
    <location>
        <begin position="1532"/>
        <end position="1546"/>
    </location>
</feature>
<feature type="compositionally biased region" description="Basic and acidic residues" evidence="5">
    <location>
        <begin position="1547"/>
        <end position="1562"/>
    </location>
</feature>
<feature type="compositionally biased region" description="Basic and acidic residues" evidence="5">
    <location>
        <begin position="1681"/>
        <end position="1700"/>
    </location>
</feature>
<feature type="compositionally biased region" description="Polar residues" evidence="5">
    <location>
        <begin position="1748"/>
        <end position="1762"/>
    </location>
</feature>
<feature type="compositionally biased region" description="Basic and acidic residues" evidence="5">
    <location>
        <begin position="1783"/>
        <end position="1792"/>
    </location>
</feature>
<feature type="compositionally biased region" description="Basic and acidic residues" evidence="5">
    <location>
        <begin position="1804"/>
        <end position="1833"/>
    </location>
</feature>
<feature type="compositionally biased region" description="Basic and acidic residues" evidence="5">
    <location>
        <begin position="1871"/>
        <end position="1894"/>
    </location>
</feature>
<feature type="compositionally biased region" description="Low complexity" evidence="5">
    <location>
        <begin position="1899"/>
        <end position="1911"/>
    </location>
</feature>
<feature type="compositionally biased region" description="Polar residues" evidence="5">
    <location>
        <begin position="1927"/>
        <end position="1936"/>
    </location>
</feature>
<feature type="compositionally biased region" description="Basic and acidic residues" evidence="5">
    <location>
        <begin position="1937"/>
        <end position="1949"/>
    </location>
</feature>
<feature type="compositionally biased region" description="Polar residues" evidence="5">
    <location>
        <begin position="2257"/>
        <end position="2272"/>
    </location>
</feature>
<feature type="compositionally biased region" description="Polar residues" evidence="5">
    <location>
        <begin position="2283"/>
        <end position="2347"/>
    </location>
</feature>
<feature type="compositionally biased region" description="Low complexity" evidence="5">
    <location>
        <begin position="2348"/>
        <end position="2369"/>
    </location>
</feature>
<feature type="compositionally biased region" description="Polar residues" evidence="5">
    <location>
        <begin position="2370"/>
        <end position="2411"/>
    </location>
</feature>
<feature type="compositionally biased region" description="Polar residues" evidence="5">
    <location>
        <begin position="2418"/>
        <end position="2427"/>
    </location>
</feature>
<feature type="compositionally biased region" description="Low complexity" evidence="5">
    <location>
        <begin position="2459"/>
        <end position="2477"/>
    </location>
</feature>
<feature type="compositionally biased region" description="Basic and acidic residues" evidence="5">
    <location>
        <begin position="2518"/>
        <end position="2535"/>
    </location>
</feature>
<feature type="compositionally biased region" description="Polar residues" evidence="5">
    <location>
        <begin position="2555"/>
        <end position="2568"/>
    </location>
</feature>
<feature type="compositionally biased region" description="Low complexity" evidence="5">
    <location>
        <begin position="2569"/>
        <end position="2579"/>
    </location>
</feature>
<feature type="compositionally biased region" description="Basic and acidic residues" evidence="5">
    <location>
        <begin position="2580"/>
        <end position="2592"/>
    </location>
</feature>
<feature type="compositionally biased region" description="Low complexity" evidence="5">
    <location>
        <begin position="2629"/>
        <end position="2638"/>
    </location>
</feature>
<feature type="compositionally biased region" description="Polar residues" evidence="5">
    <location>
        <begin position="2668"/>
        <end position="2679"/>
    </location>
</feature>
<feature type="compositionally biased region" description="Polar residues" evidence="5">
    <location>
        <begin position="2702"/>
        <end position="2713"/>
    </location>
</feature>
<feature type="compositionally biased region" description="Low complexity" evidence="5">
    <location>
        <begin position="2762"/>
        <end position="2773"/>
    </location>
</feature>
<feature type="compositionally biased region" description="Polar residues" evidence="5">
    <location>
        <begin position="2783"/>
        <end position="2809"/>
    </location>
</feature>
<feature type="modified residue" description="N-acetylalanine" evidence="2">
    <location>
        <position position="2"/>
    </location>
</feature>
<feature type="modified residue" description="Phosphoserine" evidence="3">
    <location>
        <position position="105"/>
    </location>
</feature>
<feature type="modified residue" description="Phosphoserine" evidence="3">
    <location>
        <position position="109"/>
    </location>
</feature>
<feature type="modified residue" description="Phosphoserine" evidence="10">
    <location>
        <position position="742"/>
    </location>
</feature>
<feature type="modified residue" description="Phosphoserine" evidence="2">
    <location>
        <position position="746"/>
    </location>
</feature>
<feature type="modified residue" description="Phosphoserine" evidence="10">
    <location>
        <position position="778"/>
    </location>
</feature>
<feature type="modified residue" description="Phosphoserine" evidence="2">
    <location>
        <position position="906"/>
    </location>
</feature>
<feature type="modified residue" description="Phosphoserine" evidence="10">
    <location>
        <position position="985"/>
    </location>
</feature>
<feature type="modified residue" description="Phosphoserine" evidence="3">
    <location>
        <position position="1036"/>
    </location>
</feature>
<feature type="modified residue" description="Phosphoserine" evidence="10">
    <location>
        <position position="1040"/>
    </location>
</feature>
<feature type="modified residue" description="Phosphoserine" evidence="2">
    <location>
        <position position="1357"/>
    </location>
</feature>
<feature type="modified residue" description="Phosphoserine" evidence="10">
    <location>
        <position position="1368"/>
    </location>
</feature>
<feature type="modified residue" description="Phosphoserine" evidence="2">
    <location>
        <position position="1382"/>
    </location>
</feature>
<feature type="modified residue" description="Phosphoserine" evidence="3">
    <location>
        <position position="1389"/>
    </location>
</feature>
<feature type="modified residue" description="Phosphoserine" evidence="3">
    <location>
        <position position="1392"/>
    </location>
</feature>
<feature type="modified residue" description="Phosphothreonine" evidence="2">
    <location>
        <position position="1435"/>
    </location>
</feature>
<feature type="modified residue" description="Phosphoserine" evidence="10">
    <location>
        <position position="1565"/>
    </location>
</feature>
<feature type="modified residue" description="Phosphoserine" evidence="9">
    <location>
        <position position="1714"/>
    </location>
</feature>
<feature type="modified residue" description="Phosphoserine" evidence="2">
    <location>
        <position position="1772"/>
    </location>
</feature>
<feature type="modified residue" description="Phosphoserine" evidence="10">
    <location>
        <position position="1859"/>
    </location>
</feature>
<feature type="modified residue" description="Phosphoserine" evidence="2">
    <location>
        <position position="1861"/>
    </location>
</feature>
<feature type="modified residue" description="Phosphoserine" evidence="2">
    <location>
        <position position="1862"/>
    </location>
</feature>
<feature type="modified residue" description="Phosphoserine" evidence="3">
    <location>
        <position position="1969"/>
    </location>
</feature>
<feature type="modified residue" description="Phosphoserine" evidence="3">
    <location>
        <position position="1971"/>
    </location>
</feature>
<feature type="modified residue" description="Phosphoserine" evidence="10">
    <location>
        <position position="2087"/>
    </location>
</feature>
<feature type="modified residue" description="Phosphoserine" evidence="10">
    <location>
        <position position="2092"/>
    </location>
</feature>
<feature type="modified residue" description="Phosphoserine" evidence="3">
    <location>
        <position position="2125"/>
    </location>
</feature>
<feature type="modified residue" description="Phosphoserine" evidence="10">
    <location>
        <position position="2129"/>
    </location>
</feature>
<feature type="modified residue" description="Phosphoserine" evidence="10">
    <location>
        <position position="2130"/>
    </location>
</feature>
<feature type="modified residue" description="Phosphoserine" evidence="10">
    <location>
        <position position="2132"/>
    </location>
</feature>
<feature type="modified residue" description="Phosphothreonine" evidence="2">
    <location>
        <position position="2151"/>
    </location>
</feature>
<feature type="modified residue" description="Phosphoserine" evidence="2">
    <location>
        <position position="2260"/>
    </location>
</feature>
<feature type="modified residue" description="Phosphoserine" evidence="2">
    <location>
        <position position="2270"/>
    </location>
</feature>
<feature type="modified residue" description="Phosphoserine" evidence="2">
    <location>
        <position position="2283"/>
    </location>
</feature>
<feature type="modified residue" description="Phosphoserine" evidence="2">
    <location>
        <position position="2473"/>
    </location>
</feature>
<feature type="modified residue" description="Phosphoserine" evidence="2">
    <location>
        <position position="2535"/>
    </location>
</feature>
<feature type="modified residue" description="Phosphoserine" evidence="2">
    <location>
        <position position="2569"/>
    </location>
</feature>
<feature type="modified residue" description="Phosphoserine" evidence="2">
    <location>
        <position position="2671"/>
    </location>
</feature>
<feature type="modified residue" description="Phosphoserine" evidence="2">
    <location>
        <position position="2674"/>
    </location>
</feature>
<feature type="modified residue" description="Phosphothreonine" evidence="2">
    <location>
        <position position="2679"/>
    </location>
</feature>
<feature type="modified residue" description="Phosphoserine" evidence="10">
    <location>
        <position position="2710"/>
    </location>
</feature>
<feature type="modified residue" description="Phosphoserine" evidence="2">
    <location>
        <position position="2723"/>
    </location>
</feature>
<feature type="modified residue" description="Phosphoserine" evidence="2">
    <location>
        <position position="2788"/>
    </location>
</feature>
<feature type="mutagenesis site" description="In an IQ-induced colon tumor." evidence="7">
    <original>C</original>
    <variation>R</variation>
    <location>
        <position position="523"/>
    </location>
</feature>
<gene>
    <name type="primary">Apc</name>
</gene>
<organism>
    <name type="scientific">Rattus norvegicus</name>
    <name type="common">Rat</name>
    <dbReference type="NCBI Taxonomy" id="10116"/>
    <lineage>
        <taxon>Eukaryota</taxon>
        <taxon>Metazoa</taxon>
        <taxon>Chordata</taxon>
        <taxon>Craniata</taxon>
        <taxon>Vertebrata</taxon>
        <taxon>Euteleostomi</taxon>
        <taxon>Mammalia</taxon>
        <taxon>Eutheria</taxon>
        <taxon>Euarchontoglires</taxon>
        <taxon>Glires</taxon>
        <taxon>Rodentia</taxon>
        <taxon>Myomorpha</taxon>
        <taxon>Muroidea</taxon>
        <taxon>Muridae</taxon>
        <taxon>Murinae</taxon>
        <taxon>Rattus</taxon>
    </lineage>
</organism>
<proteinExistence type="evidence at protein level"/>
<sequence length="2842" mass="310533">MAAASYDQLLKQVEALKMENSNLRQELEDNSNHLTELETEASNMKEVLKQLQGSIEDETMTSGQIDLLERLKEFNLDSNFPGVKLRSKMSLRSYGSREGSVSSRSGECSPVPMGSFPRRAFVNGSRESTGYLEELEKERSLLLADLDKEEKEKDWYYAQLQNLTKRIDSLPLTENFSLQTDMTRRQLEYEARQIRAAMEEQLGTCQDMEKRAQRRIARIQQIEKDILRVRQLLQSQAAEAERSSQSKHETASHEAERQLEGQGVAESNLATSGSGQSSAARVDHETAGVLSSSGTHSAPRRLTSHLGTKVEMVYSLLSMLGTHDKDDMSRTLLAMSSSQDSCISMRQSGCLPLLIQLLHGNDKDSVLLGNSRGSKEARARASAALHNIIHSQPDDKRGRREIRVLHLLEQIRAYCETCWEWQEAHEQGMDQDKNPMPAPVEHQICPAVCVLMKLSFDEEHRHAMNELGGLQAIAELLQVDCEMHGLTDDHYSVTLRRYAGMALTNLTFGDVANKATLCSMKGCMRALVAQLKSESEDLQQVIASVLRNLSWRADVNSKKTLREVGSVKALMECALEVKKESTLKSVLSALWNLSAHCTENKADICAVDGALAFLVGTLTYRSQTNTLAIIESGGGILRNVSSLIATNEDHRQILRENNCLQTLLQHLKSHSLTIVSNACGTLWNLSARNPKDQEALWDMGAVSMLKNLIHSKHKMIAMGSAAALRNLMANRPAKYKDANIMSPGSSLPSLHVRKQKALEAELDAQHLSETFDNIDNLSPKASHRSKQRHKQNLYGDYVFDASRHDDNRSDNFNTGNMTVLSPYLNTTVLPSSSSSRGSLDSSRSEKDRSLERERGIGLSTYHSATENPGTSSKRGLQLSATAAQIAKVMEEVSALHTSQDDRSPASAAELHCVAEERTAARRSSASHTHPNTHNFAKSESSNRTCSMPYAKVEYKRSSNDSLNSVTSSDGYGKRGQMKPSVESYSEDDEGKFCSYGQYPADLAHKIHSANHMDDNGGELDTPINYSLKYSDEQLNSGRQSPSQNERWARPKHVIEDEIKQNEQRQSRSQNTNFPVYSENTDDKHLKFQQHFGQQECVSPYRSRGTNGSETNRMGSSHAVNQNVNQSLCQEDDYEDDKPTNYSERYSEEEQHEEEERPTNYSIKYNEEKHHVDQPIDYSLKYATDISSSQKPSFSFSKTPSVQGTKTEHNSPSSEAASAPSSNAKRQSQLHPSSAQRNGQTPKGTACKVPSINQETMQTYCVEDTPICFSRCSSLSSLSSAEDEIGCDQTTQEADSANTLQIAEIKENDVTRSAQDPASDVPAVSQSTRTKPSRLQASGLASESARHKAVEFSSGAKSPSKSGAQTPKSPPEHYVQETPLVFSRCTSVSSLDSFESRSIASSVQSEPCSGMVSGIVSPSDLPDSPGQTMPPSRSKTPPPPPPPQPVQTKREVPKTKVPAAEQREGGPKQTAVSAAVQRVQVLPDADTLLHFATESTPDGFSCSSSLSALSLDEPFIQKDVELRIMPPVQENDNGNETEPEQPEESNENQDKEVEKPDSEKDLLDDSDDDDIEILEECIISAMPTKSSRKAKKLAQTASKLPPPVARKPSQLPVYKLLPSQSRLQAQKHVSFTPGDDVPRVYCVEGTPINFSTATSLSDLTIESPPNELAAGDGVRASVQSGEFEKRDTIPTEGRSTDEAQRGKVSSIAIPDLDGSKAEEGDILAECINSALPKGRSHKPFRVKKIMDQVQQASMTSSGTNKNQIDTKKKKPTSPVKPMPQNTEYRTRVRKNTDSKVNVNTEETFSDNKDSKKQSLKNNPKDLNDKLPDNEDRVRGGFTFDSPHHYAPIEGTPYCFSRNDSLSSLDFDDDDVDLSREKAELRKGKESKDSEAKVTCHTEPSSSQQSARKAQASTKHPVNRGPSKPLLQEQPTFPQSSKDVPDRGAATDEKLQNFAIENTPVCFSRNSSLSSLSDVDQENNNNEETGPVRDAEPANAQGQPGKPQASGYAPKSFHVEDTPVCFSRNSSLSSLSIDSEDDLLRECISSAMPKKRRPSRLKGEGEWQSPRKVGSVLAEDLTLDLKDIQRPESEHGLSPDSENFDWKAIQEGANSIVSSLHQAAAAAACLSRQASSDSDSILSLKSGVSLGSPFHLTPDQEEKPFTSHKGPRILKPGEKSTLEAKKIESENKGIKGGKKVYKSLITGKIRSNSEISSQMKQPLQTNMPSISRGRTMIHIPGVRNSSSSTSPVSKKGPPLKTPASKSPSEGPVATTSPRGTKPAVKSELSPITRQTSHISGSNKGPSRSGSRDSTPSRPTQQPLSRPMQSPGRNSISPGRNGISTPNKLSQLPRTSSPSTASTKSSGSGKMSYTSPGRQLSQQNLSKQTGLSKNASSIPRSESASKGLNQMNNSNGSNKKVELSRMSSTKSSGSESDRSERPALVRQSTFIKEAPSPTLRRKLEESASFESLSPSSRPDSPTRSQAQTPVLSPSLPDMSLSTHPSVQAGGWRKLPPNLSPTIEYSDGRPSKRHDIARSHSESPSRLPVNRAGTWKREHSKHSSSLPRVSTWRRTGSSSSILSASSESSEKAKSEDEKHVNSVPGPRQMKENQVPTKGTWRKIKESEISPTNTVSQTTSSGAASGAESKTLIYQMAPAVSRTEDVWVRIEDCPINNPRSGRSPTGNTPPVIDSISEKGNPSIKDSKDTQGKQSVGSGSPVQTVGLENRLNSFIQVEAPEQKGTETKAGQGSPAPVAETGETCMAERTPFSSSSSSKHSSPSGTVAARVTPFNYNPSPRKSSADSTSARPSQIPTPVGSSTKKRDSKTDSTESSGAQSPKRHSGSYLVTSV</sequence>
<name>APC_RAT</name>
<protein>
    <recommendedName>
        <fullName>Adenomatous polyposis coli protein</fullName>
        <shortName>Protein APC</shortName>
    </recommendedName>
</protein>
<accession>P70478</accession>